<feature type="chain" id="PRO_0000202930" description="Clathrin coat assembly protein AP180A">
    <location>
        <begin position="1"/>
        <end position="637"/>
    </location>
</feature>
<feature type="domain" description="ENTH" evidence="1">
    <location>
        <begin position="1"/>
        <end position="126"/>
    </location>
</feature>
<feature type="region of interest" description="Disordered" evidence="2">
    <location>
        <begin position="555"/>
        <end position="637"/>
    </location>
</feature>
<feature type="region of interest" description="Clathrin-binding">
    <location>
        <begin position="587"/>
        <end position="637"/>
    </location>
</feature>
<feature type="compositionally biased region" description="Low complexity" evidence="2">
    <location>
        <begin position="560"/>
        <end position="579"/>
    </location>
</feature>
<feature type="compositionally biased region" description="Low complexity" evidence="2">
    <location>
        <begin position="600"/>
        <end position="622"/>
    </location>
</feature>
<feature type="compositionally biased region" description="Polar residues" evidence="2">
    <location>
        <begin position="623"/>
        <end position="637"/>
    </location>
</feature>
<comment type="function">
    <text evidence="5 6">Involved in endocytosis and clathrin cage assembly.</text>
</comment>
<comment type="subunit">
    <text evidence="6">Interacts with PAN1 and the clathrin heavy and light chains CHC1 and CLC1.</text>
</comment>
<comment type="interaction">
    <interactant intactId="EBI-24811">
        <id>P38856</id>
    </interactant>
    <interactant intactId="EBI-4766">
        <id>P22137</id>
        <label>CHC1</label>
    </interactant>
    <organismsDiffer>false</organismsDiffer>
    <experiments>2</experiments>
</comment>
<comment type="interaction">
    <interactant intactId="EBI-24811">
        <id>P38856</id>
    </interactant>
    <interactant intactId="EBI-12875">
        <id>P32521</id>
        <label>PAN1</label>
    </interactant>
    <organismsDiffer>false</organismsDiffer>
    <experiments>4</experiments>
</comment>
<comment type="subcellular location">
    <subcellularLocation>
        <location evidence="6">Bud</location>
    </subcellularLocation>
    <subcellularLocation>
        <location evidence="6">Bud neck</location>
    </subcellularLocation>
    <subcellularLocation>
        <location evidence="6">Cell membrane</location>
        <topology evidence="6">Peripheral membrane protein</topology>
        <orientation evidence="6">Cytoplasmic side</orientation>
    </subcellularLocation>
    <subcellularLocation>
        <location evidence="3">Cytoplasm</location>
    </subcellularLocation>
</comment>
<comment type="miscellaneous">
    <text evidence="4">Present with 623 molecules/cell in log phase SD medium.</text>
</comment>
<comment type="similarity">
    <text evidence="7">Belongs to the AP180 family.</text>
</comment>
<gene>
    <name type="primary">YAP1801</name>
    <name type="ordered locus">YHR161C</name>
</gene>
<organism>
    <name type="scientific">Saccharomyces cerevisiae (strain ATCC 204508 / S288c)</name>
    <name type="common">Baker's yeast</name>
    <dbReference type="NCBI Taxonomy" id="559292"/>
    <lineage>
        <taxon>Eukaryota</taxon>
        <taxon>Fungi</taxon>
        <taxon>Dikarya</taxon>
        <taxon>Ascomycota</taxon>
        <taxon>Saccharomycotina</taxon>
        <taxon>Saccharomycetes</taxon>
        <taxon>Saccharomycetales</taxon>
        <taxon>Saccharomycetaceae</taxon>
        <taxon>Saccharomyces</taxon>
    </lineage>
</organism>
<sequence length="637" mass="71660">MTTYFKLVKGATKIKSAPPKQKYLDPILLGTSNEEDFYEIVKGLDSRINDTAWTIVYKSLLVVHLMIREGSKDVALRYYSRNLEFFDIENIRGSNGSASGDMRALDRYDNYLKVRCREFGKIKKDYVRDGYRTLKLNSGNYGSSRNKQHSINIALDHVESLEVQIQALIKNKYTQYDLSNELIIFGFKLLIQDLLALYNALNEGIITLLESFFELSHHNAERTLDLYKTFVDLTEHVVRYLKSGKTAGLKIPVIKHITTKLVRSLEEHLIEDDKTHNTFVPVDSSQGSAGAVVAKSTAQERLEQIREQKRILEAQLKNEQVAISPALTTVTAAQSYNPFGTDSSMHTNIPMAVANQTQQIANNPFVSQTQPQVMNTPTAHTEPANLNVPEYAAVQHTVNFNPVQDAGVSAQQTGYYSINNHLTPTFTGAGFGGYSVSQDTTAASNQQVSHSQTGSNNPFALHNAATIATGNPAHENVLNNPFSRPNFDEQNTNMPLQQQIISNPFQNQTYNQQQFQQQKMPLSSINSVMTTPTSMQGSMNIPQRFDKMEFQAHYTQNHLQQQQQQQQQQQQQQQQQPQQGYYVPATAGANPVTNITGTVQPQNFPFYPQQQPQPEQSQTQQPVLGNQYANNLNLIDM</sequence>
<dbReference type="EMBL" id="U10397">
    <property type="protein sequence ID" value="AAB68993.1"/>
    <property type="molecule type" value="Genomic_DNA"/>
</dbReference>
<dbReference type="EMBL" id="BK006934">
    <property type="protein sequence ID" value="DAA06854.1"/>
    <property type="molecule type" value="Genomic_DNA"/>
</dbReference>
<dbReference type="PIR" id="S46771">
    <property type="entry name" value="S46771"/>
</dbReference>
<dbReference type="RefSeq" id="NP_012031.1">
    <property type="nucleotide sequence ID" value="NM_001179292.1"/>
</dbReference>
<dbReference type="PDB" id="9EXF">
    <property type="method" value="X-ray"/>
    <property type="resolution" value="1.95 A"/>
    <property type="chains" value="E/F/G/H/J/K/M/N/O/P=631-637"/>
</dbReference>
<dbReference type="PDBsum" id="9EXF"/>
<dbReference type="SMR" id="P38856"/>
<dbReference type="BioGRID" id="36595">
    <property type="interactions" value="126"/>
</dbReference>
<dbReference type="DIP" id="DIP-2278N"/>
<dbReference type="ELM" id="P38856"/>
<dbReference type="FunCoup" id="P38856">
    <property type="interactions" value="506"/>
</dbReference>
<dbReference type="IntAct" id="P38856">
    <property type="interactions" value="18"/>
</dbReference>
<dbReference type="MINT" id="P38856"/>
<dbReference type="STRING" id="4932.YHR161C"/>
<dbReference type="iPTMnet" id="P38856"/>
<dbReference type="PaxDb" id="4932-YHR161C"/>
<dbReference type="PeptideAtlas" id="P38856"/>
<dbReference type="EnsemblFungi" id="YHR161C_mRNA">
    <property type="protein sequence ID" value="YHR161C"/>
    <property type="gene ID" value="YHR161C"/>
</dbReference>
<dbReference type="GeneID" id="856566"/>
<dbReference type="KEGG" id="sce:YHR161C"/>
<dbReference type="AGR" id="SGD:S000001204"/>
<dbReference type="SGD" id="S000001204">
    <property type="gene designation" value="YAP1801"/>
</dbReference>
<dbReference type="VEuPathDB" id="FungiDB:YHR161C"/>
<dbReference type="eggNOG" id="KOG0251">
    <property type="taxonomic scope" value="Eukaryota"/>
</dbReference>
<dbReference type="GeneTree" id="ENSGT00950000183068"/>
<dbReference type="HOGENOM" id="CLU_025901_0_0_1"/>
<dbReference type="InParanoid" id="P38856"/>
<dbReference type="OMA" id="HHNAERT"/>
<dbReference type="OrthoDB" id="44015at2759"/>
<dbReference type="BioCyc" id="YEAST:G3O-31196-MONOMER"/>
<dbReference type="BioGRID-ORCS" id="856566">
    <property type="hits" value="1 hit in 10 CRISPR screens"/>
</dbReference>
<dbReference type="PRO" id="PR:P38856"/>
<dbReference type="Proteomes" id="UP000002311">
    <property type="component" value="Chromosome VIII"/>
</dbReference>
<dbReference type="RNAct" id="P38856">
    <property type="molecule type" value="protein"/>
</dbReference>
<dbReference type="GO" id="GO:0005935">
    <property type="term" value="C:cellular bud neck"/>
    <property type="evidence" value="ECO:0007005"/>
    <property type="project" value="SGD"/>
</dbReference>
<dbReference type="GO" id="GO:0005905">
    <property type="term" value="C:clathrin-coated pit"/>
    <property type="evidence" value="ECO:0000318"/>
    <property type="project" value="GO_Central"/>
</dbReference>
<dbReference type="GO" id="GO:0030136">
    <property type="term" value="C:clathrin-coated vesicle"/>
    <property type="evidence" value="ECO:0000318"/>
    <property type="project" value="GO_Central"/>
</dbReference>
<dbReference type="GO" id="GO:0005886">
    <property type="term" value="C:plasma membrane"/>
    <property type="evidence" value="ECO:0000314"/>
    <property type="project" value="SGD"/>
</dbReference>
<dbReference type="GO" id="GO:0005628">
    <property type="term" value="C:prospore membrane"/>
    <property type="evidence" value="ECO:0007005"/>
    <property type="project" value="SGD"/>
</dbReference>
<dbReference type="GO" id="GO:0005545">
    <property type="term" value="F:1-phosphatidylinositol binding"/>
    <property type="evidence" value="ECO:0000318"/>
    <property type="project" value="GO_Central"/>
</dbReference>
<dbReference type="GO" id="GO:0030276">
    <property type="term" value="F:clathrin binding"/>
    <property type="evidence" value="ECO:0000314"/>
    <property type="project" value="SGD"/>
</dbReference>
<dbReference type="GO" id="GO:0032050">
    <property type="term" value="F:clathrin heavy chain binding"/>
    <property type="evidence" value="ECO:0000318"/>
    <property type="project" value="GO_Central"/>
</dbReference>
<dbReference type="GO" id="GO:0005546">
    <property type="term" value="F:phosphatidylinositol-4,5-bisphosphate binding"/>
    <property type="evidence" value="ECO:0000318"/>
    <property type="project" value="GO_Central"/>
</dbReference>
<dbReference type="GO" id="GO:0000149">
    <property type="term" value="F:SNARE binding"/>
    <property type="evidence" value="ECO:0000318"/>
    <property type="project" value="GO_Central"/>
</dbReference>
<dbReference type="GO" id="GO:0048268">
    <property type="term" value="P:clathrin coat assembly"/>
    <property type="evidence" value="ECO:0007669"/>
    <property type="project" value="InterPro"/>
</dbReference>
<dbReference type="GO" id="GO:0072583">
    <property type="term" value="P:clathrin-dependent endocytosis"/>
    <property type="evidence" value="ECO:0000318"/>
    <property type="project" value="GO_Central"/>
</dbReference>
<dbReference type="GO" id="GO:0006897">
    <property type="term" value="P:endocytosis"/>
    <property type="evidence" value="ECO:0000353"/>
    <property type="project" value="SGD"/>
</dbReference>
<dbReference type="GO" id="GO:0006900">
    <property type="term" value="P:vesicle budding from membrane"/>
    <property type="evidence" value="ECO:0000318"/>
    <property type="project" value="GO_Central"/>
</dbReference>
<dbReference type="CDD" id="cd16988">
    <property type="entry name" value="ANTH_N_YAP180"/>
    <property type="match status" value="1"/>
</dbReference>
<dbReference type="FunFam" id="1.20.58.150:FF:000004">
    <property type="entry name" value="ENTH domain protein"/>
    <property type="match status" value="1"/>
</dbReference>
<dbReference type="FunFam" id="1.25.40.90:FF:000025">
    <property type="entry name" value="ENTH domain protein"/>
    <property type="match status" value="1"/>
</dbReference>
<dbReference type="Gene3D" id="1.25.40.90">
    <property type="match status" value="1"/>
</dbReference>
<dbReference type="Gene3D" id="1.20.58.150">
    <property type="entry name" value="ANTH domain"/>
    <property type="match status" value="1"/>
</dbReference>
<dbReference type="InterPro" id="IPR011417">
    <property type="entry name" value="ANTH_dom"/>
</dbReference>
<dbReference type="InterPro" id="IPR014712">
    <property type="entry name" value="ANTH_dom_sf"/>
</dbReference>
<dbReference type="InterPro" id="IPR045192">
    <property type="entry name" value="AP180-like"/>
</dbReference>
<dbReference type="InterPro" id="IPR013809">
    <property type="entry name" value="ENTH"/>
</dbReference>
<dbReference type="InterPro" id="IPR008942">
    <property type="entry name" value="ENTH_VHS"/>
</dbReference>
<dbReference type="PANTHER" id="PTHR22951">
    <property type="entry name" value="CLATHRIN ASSEMBLY PROTEIN"/>
    <property type="match status" value="1"/>
</dbReference>
<dbReference type="PANTHER" id="PTHR22951:SF5">
    <property type="entry name" value="PHOSPHATIDYLINOSITOL-BINDING CLATHRIN ASSEMBLY PROTEIN LAP"/>
    <property type="match status" value="1"/>
</dbReference>
<dbReference type="Pfam" id="PF07651">
    <property type="entry name" value="ANTH"/>
    <property type="match status" value="1"/>
</dbReference>
<dbReference type="SMART" id="SM00273">
    <property type="entry name" value="ENTH"/>
    <property type="match status" value="1"/>
</dbReference>
<dbReference type="SUPFAM" id="SSF48464">
    <property type="entry name" value="ENTH/VHS domain"/>
    <property type="match status" value="1"/>
</dbReference>
<dbReference type="SUPFAM" id="SSF89009">
    <property type="entry name" value="GAT-like domain"/>
    <property type="match status" value="1"/>
</dbReference>
<dbReference type="PROSITE" id="PS50942">
    <property type="entry name" value="ENTH"/>
    <property type="match status" value="1"/>
</dbReference>
<reference key="1">
    <citation type="journal article" date="1994" name="Science">
        <title>Complete nucleotide sequence of Saccharomyces cerevisiae chromosome VIII.</title>
        <authorList>
            <person name="Johnston M."/>
            <person name="Andrews S."/>
            <person name="Brinkman R."/>
            <person name="Cooper J."/>
            <person name="Ding H."/>
            <person name="Dover J."/>
            <person name="Du Z."/>
            <person name="Favello A."/>
            <person name="Fulton L."/>
            <person name="Gattung S."/>
            <person name="Geisel C."/>
            <person name="Kirsten J."/>
            <person name="Kucaba T."/>
            <person name="Hillier L.W."/>
            <person name="Jier M."/>
            <person name="Johnston L."/>
            <person name="Langston Y."/>
            <person name="Latreille P."/>
            <person name="Louis E.J."/>
            <person name="Macri C."/>
            <person name="Mardis E."/>
            <person name="Menezes S."/>
            <person name="Mouser L."/>
            <person name="Nhan M."/>
            <person name="Rifkin L."/>
            <person name="Riles L."/>
            <person name="St Peter H."/>
            <person name="Trevaskis E."/>
            <person name="Vaughan K."/>
            <person name="Vignati D."/>
            <person name="Wilcox L."/>
            <person name="Wohldman P."/>
            <person name="Waterston R."/>
            <person name="Wilson R."/>
            <person name="Vaudin M."/>
        </authorList>
    </citation>
    <scope>NUCLEOTIDE SEQUENCE [LARGE SCALE GENOMIC DNA]</scope>
    <source>
        <strain>ATCC 204508 / S288c</strain>
    </source>
</reference>
<reference key="2">
    <citation type="journal article" date="2014" name="G3 (Bethesda)">
        <title>The reference genome sequence of Saccharomyces cerevisiae: Then and now.</title>
        <authorList>
            <person name="Engel S.R."/>
            <person name="Dietrich F.S."/>
            <person name="Fisk D.G."/>
            <person name="Binkley G."/>
            <person name="Balakrishnan R."/>
            <person name="Costanzo M.C."/>
            <person name="Dwight S.S."/>
            <person name="Hitz B.C."/>
            <person name="Karra K."/>
            <person name="Nash R.S."/>
            <person name="Weng S."/>
            <person name="Wong E.D."/>
            <person name="Lloyd P."/>
            <person name="Skrzypek M.S."/>
            <person name="Miyasato S.R."/>
            <person name="Simison M."/>
            <person name="Cherry J.M."/>
        </authorList>
    </citation>
    <scope>GENOME REANNOTATION</scope>
    <source>
        <strain>ATCC 204508 / S288c</strain>
    </source>
</reference>
<reference key="3">
    <citation type="journal article" date="1998" name="J. Cell Biol.">
        <title>Pan1p, yeast eps15, functions as a multivalent adaptor that coordinates protein-protein interactions essential for endocytosis.</title>
        <authorList>
            <person name="Wendland B."/>
            <person name="Emr S.D."/>
        </authorList>
    </citation>
    <scope>FUNCTION</scope>
    <scope>SUBCELLULAR LOCATION</scope>
    <scope>DOMAIN</scope>
    <scope>INTERACTION WITH CHC1; CLC1 AND PAN1</scope>
</reference>
<reference key="4">
    <citation type="journal article" date="2003" name="Genetics">
        <title>The Sla2p talin domain plays a role in endocytosis in Saccharomyces cerevisiae.</title>
        <authorList>
            <person name="Baggett J.J."/>
            <person name="D'Aquino K.E."/>
            <person name="Wendland B."/>
        </authorList>
    </citation>
    <scope>FUNCTION</scope>
</reference>
<reference key="5">
    <citation type="journal article" date="2003" name="Nature">
        <title>Global analysis of protein localization in budding yeast.</title>
        <authorList>
            <person name="Huh W.-K."/>
            <person name="Falvo J.V."/>
            <person name="Gerke L.C."/>
            <person name="Carroll A.S."/>
            <person name="Howson R.W."/>
            <person name="Weissman J.S."/>
            <person name="O'Shea E.K."/>
        </authorList>
    </citation>
    <scope>SUBCELLULAR LOCATION [LARGE SCALE ANALYSIS]</scope>
</reference>
<reference key="6">
    <citation type="journal article" date="2003" name="Nature">
        <title>Global analysis of protein expression in yeast.</title>
        <authorList>
            <person name="Ghaemmaghami S."/>
            <person name="Huh W.-K."/>
            <person name="Bower K."/>
            <person name="Howson R.W."/>
            <person name="Belle A."/>
            <person name="Dephoure N."/>
            <person name="O'Shea E.K."/>
            <person name="Weissman J.S."/>
        </authorList>
    </citation>
    <scope>LEVEL OF PROTEIN EXPRESSION [LARGE SCALE ANALYSIS]</scope>
</reference>
<evidence type="ECO:0000255" key="1">
    <source>
        <dbReference type="PROSITE-ProRule" id="PRU00243"/>
    </source>
</evidence>
<evidence type="ECO:0000256" key="2">
    <source>
        <dbReference type="SAM" id="MobiDB-lite"/>
    </source>
</evidence>
<evidence type="ECO:0000269" key="3">
    <source>
    </source>
</evidence>
<evidence type="ECO:0000269" key="4">
    <source>
    </source>
</evidence>
<evidence type="ECO:0000269" key="5">
    <source>
    </source>
</evidence>
<evidence type="ECO:0000269" key="6">
    <source>
    </source>
</evidence>
<evidence type="ECO:0000305" key="7"/>
<keyword id="KW-0002">3D-structure</keyword>
<keyword id="KW-1003">Cell membrane</keyword>
<keyword id="KW-0963">Cytoplasm</keyword>
<keyword id="KW-0254">Endocytosis</keyword>
<keyword id="KW-0472">Membrane</keyword>
<keyword id="KW-1185">Reference proteome</keyword>
<proteinExistence type="evidence at protein level"/>
<protein>
    <recommendedName>
        <fullName>Clathrin coat assembly protein AP180A</fullName>
    </recommendedName>
</protein>
<accession>P38856</accession>
<accession>D3DLB0</accession>
<name>AP18A_YEAST</name>